<accession>B4T595</accession>
<name>RSXB_SALNS</name>
<comment type="function">
    <text evidence="1">Part of a membrane-bound complex that couples electron transfer with translocation of ions across the membrane. Required to maintain the reduced state of SoxR.</text>
</comment>
<comment type="cofactor">
    <cofactor evidence="1">
        <name>[4Fe-4S] cluster</name>
        <dbReference type="ChEBI" id="CHEBI:49883"/>
    </cofactor>
    <text evidence="1">Binds 3 [4Fe-4S] clusters.</text>
</comment>
<comment type="subunit">
    <text evidence="1">The complex is composed of six subunits: RsxA, RsxB, RsxC, RsxD, RsxE and RsxG.</text>
</comment>
<comment type="subcellular location">
    <subcellularLocation>
        <location evidence="1">Cell inner membrane</location>
    </subcellularLocation>
</comment>
<comment type="similarity">
    <text evidence="1">Belongs to the 4Fe4S bacterial-type ferredoxin family. RnfB subfamily.</text>
</comment>
<reference key="1">
    <citation type="journal article" date="2011" name="J. Bacteriol.">
        <title>Comparative genomics of 28 Salmonella enterica isolates: evidence for CRISPR-mediated adaptive sublineage evolution.</title>
        <authorList>
            <person name="Fricke W.F."/>
            <person name="Mammel M.K."/>
            <person name="McDermott P.F."/>
            <person name="Tartera C."/>
            <person name="White D.G."/>
            <person name="Leclerc J.E."/>
            <person name="Ravel J."/>
            <person name="Cebula T.A."/>
        </authorList>
    </citation>
    <scope>NUCLEOTIDE SEQUENCE [LARGE SCALE GENOMIC DNA]</scope>
    <source>
        <strain>SL254</strain>
    </source>
</reference>
<keyword id="KW-0004">4Fe-4S</keyword>
<keyword id="KW-0997">Cell inner membrane</keyword>
<keyword id="KW-1003">Cell membrane</keyword>
<keyword id="KW-0249">Electron transport</keyword>
<keyword id="KW-0408">Iron</keyword>
<keyword id="KW-0411">Iron-sulfur</keyword>
<keyword id="KW-0472">Membrane</keyword>
<keyword id="KW-0479">Metal-binding</keyword>
<keyword id="KW-0677">Repeat</keyword>
<keyword id="KW-1278">Translocase</keyword>
<keyword id="KW-0813">Transport</keyword>
<organism>
    <name type="scientific">Salmonella newport (strain SL254)</name>
    <dbReference type="NCBI Taxonomy" id="423368"/>
    <lineage>
        <taxon>Bacteria</taxon>
        <taxon>Pseudomonadati</taxon>
        <taxon>Pseudomonadota</taxon>
        <taxon>Gammaproteobacteria</taxon>
        <taxon>Enterobacterales</taxon>
        <taxon>Enterobacteriaceae</taxon>
        <taxon>Salmonella</taxon>
    </lineage>
</organism>
<feature type="chain" id="PRO_1000194496" description="Ion-translocating oxidoreductase complex subunit B">
    <location>
        <begin position="1"/>
        <end position="192"/>
    </location>
</feature>
<feature type="domain" description="4Fe-4S" evidence="1">
    <location>
        <begin position="32"/>
        <end position="91"/>
    </location>
</feature>
<feature type="domain" description="4Fe-4S ferredoxin-type 1" evidence="1">
    <location>
        <begin position="108"/>
        <end position="137"/>
    </location>
</feature>
<feature type="domain" description="4Fe-4S ferredoxin-type 2" evidence="1">
    <location>
        <begin position="138"/>
        <end position="167"/>
    </location>
</feature>
<feature type="region of interest" description="Hydrophobic" evidence="1">
    <location>
        <begin position="1"/>
        <end position="26"/>
    </location>
</feature>
<feature type="binding site" evidence="1">
    <location>
        <position position="49"/>
    </location>
    <ligand>
        <name>[4Fe-4S] cluster</name>
        <dbReference type="ChEBI" id="CHEBI:49883"/>
        <label>1</label>
    </ligand>
</feature>
<feature type="binding site" evidence="1">
    <location>
        <position position="52"/>
    </location>
    <ligand>
        <name>[4Fe-4S] cluster</name>
        <dbReference type="ChEBI" id="CHEBI:49883"/>
        <label>1</label>
    </ligand>
</feature>
<feature type="binding site" evidence="1">
    <location>
        <position position="57"/>
    </location>
    <ligand>
        <name>[4Fe-4S] cluster</name>
        <dbReference type="ChEBI" id="CHEBI:49883"/>
        <label>1</label>
    </ligand>
</feature>
<feature type="binding site" evidence="1">
    <location>
        <position position="74"/>
    </location>
    <ligand>
        <name>[4Fe-4S] cluster</name>
        <dbReference type="ChEBI" id="CHEBI:49883"/>
        <label>1</label>
    </ligand>
</feature>
<feature type="binding site" evidence="1">
    <location>
        <position position="117"/>
    </location>
    <ligand>
        <name>[4Fe-4S] cluster</name>
        <dbReference type="ChEBI" id="CHEBI:49883"/>
        <label>2</label>
    </ligand>
</feature>
<feature type="binding site" evidence="1">
    <location>
        <position position="120"/>
    </location>
    <ligand>
        <name>[4Fe-4S] cluster</name>
        <dbReference type="ChEBI" id="CHEBI:49883"/>
        <label>2</label>
    </ligand>
</feature>
<feature type="binding site" evidence="1">
    <location>
        <position position="123"/>
    </location>
    <ligand>
        <name>[4Fe-4S] cluster</name>
        <dbReference type="ChEBI" id="CHEBI:49883"/>
        <label>2</label>
    </ligand>
</feature>
<feature type="binding site" evidence="1">
    <location>
        <position position="127"/>
    </location>
    <ligand>
        <name>[4Fe-4S] cluster</name>
        <dbReference type="ChEBI" id="CHEBI:49883"/>
        <label>3</label>
    </ligand>
</feature>
<feature type="binding site" evidence="1">
    <location>
        <position position="147"/>
    </location>
    <ligand>
        <name>[4Fe-4S] cluster</name>
        <dbReference type="ChEBI" id="CHEBI:49883"/>
        <label>3</label>
    </ligand>
</feature>
<feature type="binding site" evidence="1">
    <location>
        <position position="150"/>
    </location>
    <ligand>
        <name>[4Fe-4S] cluster</name>
        <dbReference type="ChEBI" id="CHEBI:49883"/>
        <label>3</label>
    </ligand>
</feature>
<feature type="binding site" evidence="1">
    <location>
        <position position="153"/>
    </location>
    <ligand>
        <name>[4Fe-4S] cluster</name>
        <dbReference type="ChEBI" id="CHEBI:49883"/>
        <label>3</label>
    </ligand>
</feature>
<feature type="binding site" evidence="1">
    <location>
        <position position="157"/>
    </location>
    <ligand>
        <name>[4Fe-4S] cluster</name>
        <dbReference type="ChEBI" id="CHEBI:49883"/>
        <label>2</label>
    </ligand>
</feature>
<gene>
    <name evidence="1" type="primary">rsxB</name>
    <name type="synonym">rnfB</name>
    <name type="ordered locus">SNSL254_A1568</name>
</gene>
<protein>
    <recommendedName>
        <fullName evidence="1">Ion-translocating oxidoreductase complex subunit B</fullName>
        <ecNumber evidence="1">7.-.-.-</ecNumber>
    </recommendedName>
    <alternativeName>
        <fullName evidence="1">Rsx electron transport complex subunit B</fullName>
    </alternativeName>
</protein>
<evidence type="ECO:0000255" key="1">
    <source>
        <dbReference type="HAMAP-Rule" id="MF_00463"/>
    </source>
</evidence>
<proteinExistence type="inferred from homology"/>
<sequence>MNTIWIAVGALALLGLVFGAILGYASRRFAVEDDPVVEKIDAILPQSQCGQCGYPGCRPYAEAVGLQGEKINRCAPGGEAVMLKIAELLNVEPQPCDGEEQQAAPVRMLAVIDENNCIGCTKCIQACPVDAIVGATRAMHTVMSDLCTGCNLCVDPCPTHCIELRPVNETPDSWKWDLNTIPVRIIPVEQHA</sequence>
<dbReference type="EC" id="7.-.-.-" evidence="1"/>
<dbReference type="EMBL" id="CP001113">
    <property type="protein sequence ID" value="ACF61115.1"/>
    <property type="molecule type" value="Genomic_DNA"/>
</dbReference>
<dbReference type="RefSeq" id="WP_001092592.1">
    <property type="nucleotide sequence ID" value="NZ_CCMR01000003.1"/>
</dbReference>
<dbReference type="KEGG" id="see:SNSL254_A1568"/>
<dbReference type="HOGENOM" id="CLU_063448_2_0_6"/>
<dbReference type="Proteomes" id="UP000008824">
    <property type="component" value="Chromosome"/>
</dbReference>
<dbReference type="GO" id="GO:0005886">
    <property type="term" value="C:plasma membrane"/>
    <property type="evidence" value="ECO:0007669"/>
    <property type="project" value="UniProtKB-SubCell"/>
</dbReference>
<dbReference type="GO" id="GO:0051539">
    <property type="term" value="F:4 iron, 4 sulfur cluster binding"/>
    <property type="evidence" value="ECO:0007669"/>
    <property type="project" value="UniProtKB-UniRule"/>
</dbReference>
<dbReference type="GO" id="GO:0009055">
    <property type="term" value="F:electron transfer activity"/>
    <property type="evidence" value="ECO:0007669"/>
    <property type="project" value="InterPro"/>
</dbReference>
<dbReference type="GO" id="GO:0046872">
    <property type="term" value="F:metal ion binding"/>
    <property type="evidence" value="ECO:0007669"/>
    <property type="project" value="UniProtKB-KW"/>
</dbReference>
<dbReference type="GO" id="GO:0022900">
    <property type="term" value="P:electron transport chain"/>
    <property type="evidence" value="ECO:0007669"/>
    <property type="project" value="UniProtKB-UniRule"/>
</dbReference>
<dbReference type="FunFam" id="1.10.15.40:FF:000001">
    <property type="entry name" value="Ion-translocating oxidoreductase complex subunit B"/>
    <property type="match status" value="1"/>
</dbReference>
<dbReference type="Gene3D" id="3.30.70.20">
    <property type="match status" value="1"/>
</dbReference>
<dbReference type="Gene3D" id="1.10.15.40">
    <property type="entry name" value="Electron transport complex subunit B, putative Fe-S cluster"/>
    <property type="match status" value="1"/>
</dbReference>
<dbReference type="HAMAP" id="MF_00463">
    <property type="entry name" value="RsxB_RnfB"/>
    <property type="match status" value="1"/>
</dbReference>
<dbReference type="InterPro" id="IPR007202">
    <property type="entry name" value="4Fe-4S_dom"/>
</dbReference>
<dbReference type="InterPro" id="IPR017896">
    <property type="entry name" value="4Fe4S_Fe-S-bd"/>
</dbReference>
<dbReference type="InterPro" id="IPR017900">
    <property type="entry name" value="4Fe4S_Fe_S_CS"/>
</dbReference>
<dbReference type="InterPro" id="IPR050395">
    <property type="entry name" value="4Fe4S_Ferredoxin_RnfB"/>
</dbReference>
<dbReference type="InterPro" id="IPR010207">
    <property type="entry name" value="Elect_transpt_cplx_RnfB/RsxB"/>
</dbReference>
<dbReference type="InterPro" id="IPR016463">
    <property type="entry name" value="RnfB/RsxB_Proteobac"/>
</dbReference>
<dbReference type="NCBIfam" id="NF003475">
    <property type="entry name" value="PRK05113.1"/>
    <property type="match status" value="1"/>
</dbReference>
<dbReference type="NCBIfam" id="TIGR01944">
    <property type="entry name" value="rnfB"/>
    <property type="match status" value="1"/>
</dbReference>
<dbReference type="PANTHER" id="PTHR43560">
    <property type="entry name" value="ION-TRANSLOCATING OXIDOREDUCTASE COMPLEX SUBUNIT B"/>
    <property type="match status" value="1"/>
</dbReference>
<dbReference type="PANTHER" id="PTHR43560:SF1">
    <property type="entry name" value="ION-TRANSLOCATING OXIDOREDUCTASE COMPLEX SUBUNIT B"/>
    <property type="match status" value="1"/>
</dbReference>
<dbReference type="Pfam" id="PF14697">
    <property type="entry name" value="Fer4_21"/>
    <property type="match status" value="1"/>
</dbReference>
<dbReference type="Pfam" id="PF04060">
    <property type="entry name" value="FeS"/>
    <property type="match status" value="1"/>
</dbReference>
<dbReference type="PIRSF" id="PIRSF005784">
    <property type="entry name" value="Elect_transpt_RnfB"/>
    <property type="match status" value="1"/>
</dbReference>
<dbReference type="SUPFAM" id="SSF54862">
    <property type="entry name" value="4Fe-4S ferredoxins"/>
    <property type="match status" value="1"/>
</dbReference>
<dbReference type="PROSITE" id="PS51656">
    <property type="entry name" value="4FE4S"/>
    <property type="match status" value="1"/>
</dbReference>
<dbReference type="PROSITE" id="PS00198">
    <property type="entry name" value="4FE4S_FER_1"/>
    <property type="match status" value="2"/>
</dbReference>
<dbReference type="PROSITE" id="PS51379">
    <property type="entry name" value="4FE4S_FER_2"/>
    <property type="match status" value="2"/>
</dbReference>